<gene>
    <name type="primary">slc16a10</name>
    <name type="ORF">si:ch211-241j12.1</name>
    <name type="ORF">zgc:158478</name>
</gene>
<reference key="1">
    <citation type="submission" date="2006-12" db="EMBL/GenBank/DDBJ databases">
        <authorList>
            <consortium name="NIH - Zebrafish Gene Collection (ZGC) project"/>
        </authorList>
    </citation>
    <scope>NUCLEOTIDE SEQUENCE [LARGE SCALE MRNA]</scope>
    <source>
        <tissue>Embryo</tissue>
    </source>
</reference>
<reference key="2">
    <citation type="journal article" date="2013" name="Nature">
        <title>The zebrafish reference genome sequence and its relationship to the human genome.</title>
        <authorList>
            <person name="Howe K."/>
            <person name="Clark M.D."/>
            <person name="Torroja C.F."/>
            <person name="Torrance J."/>
            <person name="Berthelot C."/>
            <person name="Muffato M."/>
            <person name="Collins J.E."/>
            <person name="Humphray S."/>
            <person name="McLaren K."/>
            <person name="Matthews L."/>
            <person name="McLaren S."/>
            <person name="Sealy I."/>
            <person name="Caccamo M."/>
            <person name="Churcher C."/>
            <person name="Scott C."/>
            <person name="Barrett J.C."/>
            <person name="Koch R."/>
            <person name="Rauch G.J."/>
            <person name="White S."/>
            <person name="Chow W."/>
            <person name="Kilian B."/>
            <person name="Quintais L.T."/>
            <person name="Guerra-Assuncao J.A."/>
            <person name="Zhou Y."/>
            <person name="Gu Y."/>
            <person name="Yen J."/>
            <person name="Vogel J.H."/>
            <person name="Eyre T."/>
            <person name="Redmond S."/>
            <person name="Banerjee R."/>
            <person name="Chi J."/>
            <person name="Fu B."/>
            <person name="Langley E."/>
            <person name="Maguire S.F."/>
            <person name="Laird G.K."/>
            <person name="Lloyd D."/>
            <person name="Kenyon E."/>
            <person name="Donaldson S."/>
            <person name="Sehra H."/>
            <person name="Almeida-King J."/>
            <person name="Loveland J."/>
            <person name="Trevanion S."/>
            <person name="Jones M."/>
            <person name="Quail M."/>
            <person name="Willey D."/>
            <person name="Hunt A."/>
            <person name="Burton J."/>
            <person name="Sims S."/>
            <person name="McLay K."/>
            <person name="Plumb B."/>
            <person name="Davis J."/>
            <person name="Clee C."/>
            <person name="Oliver K."/>
            <person name="Clark R."/>
            <person name="Riddle C."/>
            <person name="Elliot D."/>
            <person name="Threadgold G."/>
            <person name="Harden G."/>
            <person name="Ware D."/>
            <person name="Begum S."/>
            <person name="Mortimore B."/>
            <person name="Kerry G."/>
            <person name="Heath P."/>
            <person name="Phillimore B."/>
            <person name="Tracey A."/>
            <person name="Corby N."/>
            <person name="Dunn M."/>
            <person name="Johnson C."/>
            <person name="Wood J."/>
            <person name="Clark S."/>
            <person name="Pelan S."/>
            <person name="Griffiths G."/>
            <person name="Smith M."/>
            <person name="Glithero R."/>
            <person name="Howden P."/>
            <person name="Barker N."/>
            <person name="Lloyd C."/>
            <person name="Stevens C."/>
            <person name="Harley J."/>
            <person name="Holt K."/>
            <person name="Panagiotidis G."/>
            <person name="Lovell J."/>
            <person name="Beasley H."/>
            <person name="Henderson C."/>
            <person name="Gordon D."/>
            <person name="Auger K."/>
            <person name="Wright D."/>
            <person name="Collins J."/>
            <person name="Raisen C."/>
            <person name="Dyer L."/>
            <person name="Leung K."/>
            <person name="Robertson L."/>
            <person name="Ambridge K."/>
            <person name="Leongamornlert D."/>
            <person name="McGuire S."/>
            <person name="Gilderthorp R."/>
            <person name="Griffiths C."/>
            <person name="Manthravadi D."/>
            <person name="Nichol S."/>
            <person name="Barker G."/>
            <person name="Whitehead S."/>
            <person name="Kay M."/>
            <person name="Brown J."/>
            <person name="Murnane C."/>
            <person name="Gray E."/>
            <person name="Humphries M."/>
            <person name="Sycamore N."/>
            <person name="Barker D."/>
            <person name="Saunders D."/>
            <person name="Wallis J."/>
            <person name="Babbage A."/>
            <person name="Hammond S."/>
            <person name="Mashreghi-Mohammadi M."/>
            <person name="Barr L."/>
            <person name="Martin S."/>
            <person name="Wray P."/>
            <person name="Ellington A."/>
            <person name="Matthews N."/>
            <person name="Ellwood M."/>
            <person name="Woodmansey R."/>
            <person name="Clark G."/>
            <person name="Cooper J."/>
            <person name="Tromans A."/>
            <person name="Grafham D."/>
            <person name="Skuce C."/>
            <person name="Pandian R."/>
            <person name="Andrews R."/>
            <person name="Harrison E."/>
            <person name="Kimberley A."/>
            <person name="Garnett J."/>
            <person name="Fosker N."/>
            <person name="Hall R."/>
            <person name="Garner P."/>
            <person name="Kelly D."/>
            <person name="Bird C."/>
            <person name="Palmer S."/>
            <person name="Gehring I."/>
            <person name="Berger A."/>
            <person name="Dooley C.M."/>
            <person name="Ersan-Urun Z."/>
            <person name="Eser C."/>
            <person name="Geiger H."/>
            <person name="Geisler M."/>
            <person name="Karotki L."/>
            <person name="Kirn A."/>
            <person name="Konantz J."/>
            <person name="Konantz M."/>
            <person name="Oberlander M."/>
            <person name="Rudolph-Geiger S."/>
            <person name="Teucke M."/>
            <person name="Lanz C."/>
            <person name="Raddatz G."/>
            <person name="Osoegawa K."/>
            <person name="Zhu B."/>
            <person name="Rapp A."/>
            <person name="Widaa S."/>
            <person name="Langford C."/>
            <person name="Yang F."/>
            <person name="Schuster S.C."/>
            <person name="Carter N.P."/>
            <person name="Harrow J."/>
            <person name="Ning Z."/>
            <person name="Herrero J."/>
            <person name="Searle S.M."/>
            <person name="Enright A."/>
            <person name="Geisler R."/>
            <person name="Plasterk R.H."/>
            <person name="Lee C."/>
            <person name="Westerfield M."/>
            <person name="de Jong P.J."/>
            <person name="Zon L.I."/>
            <person name="Postlethwait J.H."/>
            <person name="Nusslein-Volhard C."/>
            <person name="Hubbard T.J."/>
            <person name="Roest Crollius H."/>
            <person name="Rogers J."/>
            <person name="Stemple D.L."/>
        </authorList>
    </citation>
    <scope>NUCLEOTIDE SEQUENCE [LARGE SCALE GENOMIC DNA] OF 1-354</scope>
    <source>
        <strain>Tuebingen</strain>
    </source>
</reference>
<comment type="function">
    <text evidence="1 2">Sodium- and proton-independent thyroid hormones and aromatic acids transporter. Mediates both uptake and efflux of 3,5,3'-triiodothyronine (T3) and 3,5,3',5'-tetraiodothyronine (T4) with high affinity, suggesting a role in the homeostasis of thyroid hormone levels (By similarity). Responsible for low affinity bidirectional transport of the aromatic amino acids, such as phenylalanine, tyrosine, tryptophan and L-3,4-dihydroxyphenylalanine (L-dopa). Plays an important role in homeostasis of aromatic amino acids (By similarity).</text>
</comment>
<comment type="catalytic activity">
    <reaction evidence="1">
        <text>L-tryptophan(in) = L-tryptophan(out)</text>
        <dbReference type="Rhea" id="RHEA:70947"/>
        <dbReference type="ChEBI" id="CHEBI:57912"/>
    </reaction>
    <physiologicalReaction direction="left-to-right" evidence="1">
        <dbReference type="Rhea" id="RHEA:70948"/>
    </physiologicalReaction>
    <physiologicalReaction direction="right-to-left" evidence="1">
        <dbReference type="Rhea" id="RHEA:70949"/>
    </physiologicalReaction>
</comment>
<comment type="catalytic activity">
    <reaction evidence="1">
        <text>L-tyrosine(in) = L-tyrosine(out)</text>
        <dbReference type="Rhea" id="RHEA:68572"/>
        <dbReference type="ChEBI" id="CHEBI:58315"/>
    </reaction>
    <physiologicalReaction direction="left-to-right" evidence="1">
        <dbReference type="Rhea" id="RHEA:68573"/>
    </physiologicalReaction>
    <physiologicalReaction direction="right-to-left" evidence="1">
        <dbReference type="Rhea" id="RHEA:68574"/>
    </physiologicalReaction>
</comment>
<comment type="catalytic activity">
    <reaction evidence="1">
        <text>L-phenylalanine(in) = L-phenylalanine(out)</text>
        <dbReference type="Rhea" id="RHEA:27950"/>
        <dbReference type="ChEBI" id="CHEBI:58095"/>
    </reaction>
    <physiologicalReaction direction="left-to-right" evidence="1">
        <dbReference type="Rhea" id="RHEA:27951"/>
    </physiologicalReaction>
    <physiologicalReaction direction="right-to-left" evidence="1">
        <dbReference type="Rhea" id="RHEA:27952"/>
    </physiologicalReaction>
</comment>
<comment type="catalytic activity">
    <reaction evidence="2">
        <text>3,3',5-triiodo-L-thyronine(out) = 3,3',5-triiodo-L-thyronine(in)</text>
        <dbReference type="Rhea" id="RHEA:71811"/>
        <dbReference type="ChEBI" id="CHEBI:533015"/>
    </reaction>
    <physiologicalReaction direction="left-to-right" evidence="2">
        <dbReference type="Rhea" id="RHEA:71812"/>
    </physiologicalReaction>
    <physiologicalReaction direction="right-to-left" evidence="2">
        <dbReference type="Rhea" id="RHEA:71813"/>
    </physiologicalReaction>
</comment>
<comment type="catalytic activity">
    <reaction evidence="2">
        <text>L-thyroxine(out) = L-thyroxine(in)</text>
        <dbReference type="Rhea" id="RHEA:71819"/>
        <dbReference type="ChEBI" id="CHEBI:58448"/>
    </reaction>
    <physiologicalReaction direction="left-to-right" evidence="2">
        <dbReference type="Rhea" id="RHEA:71820"/>
    </physiologicalReaction>
    <physiologicalReaction direction="right-to-left" evidence="2">
        <dbReference type="Rhea" id="RHEA:71821"/>
    </physiologicalReaction>
</comment>
<comment type="subcellular location">
    <subcellularLocation>
        <location evidence="2">Cell membrane</location>
        <topology evidence="4">Multi-pass membrane protein</topology>
    </subcellularLocation>
    <subcellularLocation>
        <location evidence="3">Basolateral cell membrane</location>
        <topology evidence="4">Multi-pass membrane protein</topology>
    </subcellularLocation>
</comment>
<comment type="similarity">
    <text evidence="6">Belongs to the major facilitator superfamily. Monocarboxylate porter (TC 2.A.1.13) family.</text>
</comment>
<feature type="chain" id="PRO_0000314256" description="Monocarboxylate transporter 10">
    <location>
        <begin position="1"/>
        <end position="505"/>
    </location>
</feature>
<feature type="topological domain" description="Cytoplasmic" evidence="6">
    <location>
        <begin position="1"/>
        <end position="66"/>
    </location>
</feature>
<feature type="transmembrane region" description="Helical; Name=1" evidence="4">
    <location>
        <begin position="67"/>
        <end position="87"/>
    </location>
</feature>
<feature type="topological domain" description="Extracellular" evidence="6">
    <location>
        <begin position="88"/>
        <end position="114"/>
    </location>
</feature>
<feature type="transmembrane region" description="Helical; Name=2" evidence="4">
    <location>
        <begin position="115"/>
        <end position="135"/>
    </location>
</feature>
<feature type="topological domain" description="Cytoplasmic" evidence="6">
    <location>
        <begin position="136"/>
        <end position="142"/>
    </location>
</feature>
<feature type="transmembrane region" description="Helical; Name=3" evidence="4">
    <location>
        <begin position="143"/>
        <end position="163"/>
    </location>
</feature>
<feature type="topological domain" description="Extracellular" evidence="6">
    <location>
        <begin position="164"/>
        <end position="171"/>
    </location>
</feature>
<feature type="transmembrane region" description="Helical; Name=4" evidence="4">
    <location>
        <begin position="172"/>
        <end position="192"/>
    </location>
</feature>
<feature type="topological domain" description="Cytoplasmic" evidence="6">
    <location>
        <begin position="193"/>
        <end position="204"/>
    </location>
</feature>
<feature type="transmembrane region" description="Helical; Name=5" evidence="4">
    <location>
        <begin position="205"/>
        <end position="225"/>
    </location>
</feature>
<feature type="topological domain" description="Extracellular" evidence="6">
    <location>
        <begin position="226"/>
        <end position="235"/>
    </location>
</feature>
<feature type="transmembrane region" description="Helical; Name=6" evidence="4">
    <location>
        <begin position="236"/>
        <end position="256"/>
    </location>
</feature>
<feature type="topological domain" description="Cytoplasmic" evidence="6">
    <location>
        <begin position="257"/>
        <end position="286"/>
    </location>
</feature>
<feature type="transmembrane region" description="Helical; Name=7" evidence="4">
    <location>
        <begin position="287"/>
        <end position="307"/>
    </location>
</feature>
<feature type="topological domain" description="Extracellular" evidence="6">
    <location>
        <begin position="308"/>
        <end position="321"/>
    </location>
</feature>
<feature type="transmembrane region" description="Helical; Name=8" evidence="4">
    <location>
        <begin position="322"/>
        <end position="342"/>
    </location>
</feature>
<feature type="topological domain" description="Cytoplasmic" evidence="6">
    <location>
        <position position="343"/>
    </location>
</feature>
<feature type="transmembrane region" description="Helical; Name=9" evidence="4">
    <location>
        <begin position="344"/>
        <end position="364"/>
    </location>
</feature>
<feature type="topological domain" description="Extracellular" evidence="6">
    <location>
        <begin position="365"/>
        <end position="377"/>
    </location>
</feature>
<feature type="transmembrane region" description="Helical; Name=10" evidence="4">
    <location>
        <begin position="378"/>
        <end position="400"/>
    </location>
</feature>
<feature type="topological domain" description="Cytoplasmic" evidence="6">
    <location>
        <begin position="401"/>
        <end position="411"/>
    </location>
</feature>
<feature type="transmembrane region" description="Helical; Name=11" evidence="4">
    <location>
        <begin position="412"/>
        <end position="432"/>
    </location>
</feature>
<feature type="topological domain" description="Extracellular" evidence="6">
    <location>
        <begin position="433"/>
        <end position="443"/>
    </location>
</feature>
<feature type="transmembrane region" description="Helical; Name=12" evidence="4">
    <location>
        <begin position="444"/>
        <end position="464"/>
    </location>
</feature>
<feature type="topological domain" description="Cytoplasmic" evidence="6">
    <location>
        <begin position="465"/>
        <end position="505"/>
    </location>
</feature>
<feature type="region of interest" description="Disordered" evidence="5">
    <location>
        <begin position="1"/>
        <end position="64"/>
    </location>
</feature>
<feature type="region of interest" description="Disordered" evidence="5">
    <location>
        <begin position="474"/>
        <end position="505"/>
    </location>
</feature>
<feature type="compositionally biased region" description="Acidic residues" evidence="5">
    <location>
        <begin position="1"/>
        <end position="14"/>
    </location>
</feature>
<feature type="compositionally biased region" description="Pro residues" evidence="5">
    <location>
        <begin position="15"/>
        <end position="31"/>
    </location>
</feature>
<feature type="compositionally biased region" description="Acidic residues" evidence="5">
    <location>
        <begin position="32"/>
        <end position="41"/>
    </location>
</feature>
<feature type="compositionally biased region" description="Basic and acidic residues" evidence="5">
    <location>
        <begin position="494"/>
        <end position="505"/>
    </location>
</feature>
<name>MOT10_DANRE</name>
<accession>A1L1W9</accession>
<accession>Q5RHJ2</accession>
<sequence>MTEPEPTLEQEPTPEPEPTQEPTPEPTPEPEPTQEPESEPELELKQENGCTKASEQKSPEEFEPPEGGWGWVVMLASMWCNGSVFGIQNAFGIMFVYLLNEFGSEHDADLRFKTAWVGSLSMGMIFFCSPIVSVFTDLLGCRITAVGGAAVGCVGLLASSFVTSLGPMYFTYGIVFACGCSFAYQPSLVILGHYFKRRLGLVNGIVTAGSSVFTITLPYMLSGLLKSVGLYHTLRVLAIFMFILMLAGLTYKPLLPKPVSSSKPGSRCPPLSRIFNVNIWKSLGYRIWAFGIPAALYGYFVPYVHLMTHVEERFGPEANKEVLLACIGITSGVGRLIFGRVADYVPGVNKVFLQVSSFMVIGVMSMMIPLCHVFGGLIAVCLLMGLFDGCFICIMAPIAFELVGSQNVSQAIGFLLGMMSIPMTVGPPIAGFLRDRLGSYDVAFYLAGIPPLIGGAVLCAIPWVEARRKRREAANTAENTEKMLESRSPPLEDTVCRTEEPESVI</sequence>
<evidence type="ECO:0000250" key="1">
    <source>
        <dbReference type="UniProtKB" id="Q3U9N9"/>
    </source>
</evidence>
<evidence type="ECO:0000250" key="2">
    <source>
        <dbReference type="UniProtKB" id="Q8TF71"/>
    </source>
</evidence>
<evidence type="ECO:0000250" key="3">
    <source>
        <dbReference type="UniProtKB" id="Q91Y77"/>
    </source>
</evidence>
<evidence type="ECO:0000255" key="4"/>
<evidence type="ECO:0000256" key="5">
    <source>
        <dbReference type="SAM" id="MobiDB-lite"/>
    </source>
</evidence>
<evidence type="ECO:0000305" key="6"/>
<organism>
    <name type="scientific">Danio rerio</name>
    <name type="common">Zebrafish</name>
    <name type="synonym">Brachydanio rerio</name>
    <dbReference type="NCBI Taxonomy" id="7955"/>
    <lineage>
        <taxon>Eukaryota</taxon>
        <taxon>Metazoa</taxon>
        <taxon>Chordata</taxon>
        <taxon>Craniata</taxon>
        <taxon>Vertebrata</taxon>
        <taxon>Euteleostomi</taxon>
        <taxon>Actinopterygii</taxon>
        <taxon>Neopterygii</taxon>
        <taxon>Teleostei</taxon>
        <taxon>Ostariophysi</taxon>
        <taxon>Cypriniformes</taxon>
        <taxon>Danionidae</taxon>
        <taxon>Danioninae</taxon>
        <taxon>Danio</taxon>
    </lineage>
</organism>
<proteinExistence type="evidence at transcript level"/>
<keyword id="KW-1003">Cell membrane</keyword>
<keyword id="KW-0472">Membrane</keyword>
<keyword id="KW-1185">Reference proteome</keyword>
<keyword id="KW-0812">Transmembrane</keyword>
<keyword id="KW-1133">Transmembrane helix</keyword>
<dbReference type="EMBL" id="BC129246">
    <property type="protein sequence ID" value="AAI29247.1"/>
    <property type="molecule type" value="mRNA"/>
</dbReference>
<dbReference type="EMBL" id="BX511077">
    <property type="protein sequence ID" value="CAI11884.1"/>
    <property type="molecule type" value="Genomic_DNA"/>
</dbReference>
<dbReference type="RefSeq" id="NP_001073497.1">
    <property type="nucleotide sequence ID" value="NM_001080028.1"/>
</dbReference>
<dbReference type="RefSeq" id="XP_005160357.1">
    <property type="nucleotide sequence ID" value="XM_005160300.5"/>
</dbReference>
<dbReference type="SMR" id="A1L1W9"/>
<dbReference type="FunCoup" id="A1L1W9">
    <property type="interactions" value="101"/>
</dbReference>
<dbReference type="STRING" id="7955.ENSDARP00000095532"/>
<dbReference type="TCDB" id="2.A.1.13.26">
    <property type="family name" value="the major facilitator superfamily (mfs)"/>
</dbReference>
<dbReference type="PaxDb" id="7955-ENSDARP00000095532"/>
<dbReference type="PeptideAtlas" id="A1L1W9"/>
<dbReference type="Ensembl" id="ENSDART00000104762">
    <property type="protein sequence ID" value="ENSDARP00000095532"/>
    <property type="gene ID" value="ENSDARG00000020984"/>
</dbReference>
<dbReference type="Ensembl" id="ENSDART00000131635">
    <property type="protein sequence ID" value="ENSDARP00000119035"/>
    <property type="gene ID" value="ENSDARG00000020984"/>
</dbReference>
<dbReference type="GeneID" id="566499"/>
<dbReference type="KEGG" id="dre:566499"/>
<dbReference type="AGR" id="ZFIN:ZDB-GENE-040724-214"/>
<dbReference type="CTD" id="117247"/>
<dbReference type="ZFIN" id="ZDB-GENE-040724-214">
    <property type="gene designation" value="slc16a10"/>
</dbReference>
<dbReference type="eggNOG" id="KOG2504">
    <property type="taxonomic scope" value="Eukaryota"/>
</dbReference>
<dbReference type="HOGENOM" id="CLU_001265_59_1_1"/>
<dbReference type="InParanoid" id="A1L1W9"/>
<dbReference type="OMA" id="LSYRIWA"/>
<dbReference type="OrthoDB" id="6499973at2759"/>
<dbReference type="PhylomeDB" id="A1L1W9"/>
<dbReference type="TreeFam" id="TF313792"/>
<dbReference type="Reactome" id="R-DRE-352230">
    <property type="pathway name" value="Amino acid transport across the plasma membrane"/>
</dbReference>
<dbReference type="PRO" id="PR:A1L1W9"/>
<dbReference type="Proteomes" id="UP000000437">
    <property type="component" value="Chromosome 20"/>
</dbReference>
<dbReference type="Bgee" id="ENSDARG00000020984">
    <property type="expression patterns" value="Expressed in spleen and 24 other cell types or tissues"/>
</dbReference>
<dbReference type="GO" id="GO:0016323">
    <property type="term" value="C:basolateral plasma membrane"/>
    <property type="evidence" value="ECO:0000250"/>
    <property type="project" value="UniProtKB"/>
</dbReference>
<dbReference type="GO" id="GO:0005886">
    <property type="term" value="C:plasma membrane"/>
    <property type="evidence" value="ECO:0000318"/>
    <property type="project" value="GO_Central"/>
</dbReference>
<dbReference type="GO" id="GO:0015173">
    <property type="term" value="F:aromatic amino acid transmembrane transporter activity"/>
    <property type="evidence" value="ECO:0000250"/>
    <property type="project" value="UniProtKB"/>
</dbReference>
<dbReference type="GO" id="GO:0015192">
    <property type="term" value="F:L-phenylalanine transmembrane transporter activity"/>
    <property type="evidence" value="ECO:0000250"/>
    <property type="project" value="UniProtKB"/>
</dbReference>
<dbReference type="GO" id="GO:0015196">
    <property type="term" value="F:L-tryptophan transmembrane transporter activity"/>
    <property type="evidence" value="ECO:0000250"/>
    <property type="project" value="UniProtKB"/>
</dbReference>
<dbReference type="GO" id="GO:0005302">
    <property type="term" value="F:L-tyrosine transmembrane transporter activity"/>
    <property type="evidence" value="ECO:0000250"/>
    <property type="project" value="UniProtKB"/>
</dbReference>
<dbReference type="GO" id="GO:0015349">
    <property type="term" value="F:thyroid hormone transmembrane transporter activity"/>
    <property type="evidence" value="ECO:0000250"/>
    <property type="project" value="UniProtKB"/>
</dbReference>
<dbReference type="GO" id="GO:0022857">
    <property type="term" value="F:transmembrane transporter activity"/>
    <property type="evidence" value="ECO:0000318"/>
    <property type="project" value="GO_Central"/>
</dbReference>
<dbReference type="GO" id="GO:0015801">
    <property type="term" value="P:aromatic amino acid transport"/>
    <property type="evidence" value="ECO:0000250"/>
    <property type="project" value="UniProtKB"/>
</dbReference>
<dbReference type="GO" id="GO:0070327">
    <property type="term" value="P:thyroid hormone transport"/>
    <property type="evidence" value="ECO:0000250"/>
    <property type="project" value="UniProtKB"/>
</dbReference>
<dbReference type="CDD" id="cd17464">
    <property type="entry name" value="MFS_MCT10"/>
    <property type="match status" value="1"/>
</dbReference>
<dbReference type="FunFam" id="1.20.1250.20:FF:001016">
    <property type="entry name" value="Solute carrier family 16 member 2"/>
    <property type="match status" value="1"/>
</dbReference>
<dbReference type="Gene3D" id="1.20.1250.20">
    <property type="entry name" value="MFS general substrate transporter like domains"/>
    <property type="match status" value="2"/>
</dbReference>
<dbReference type="InterPro" id="IPR011701">
    <property type="entry name" value="MFS"/>
</dbReference>
<dbReference type="InterPro" id="IPR020846">
    <property type="entry name" value="MFS_dom"/>
</dbReference>
<dbReference type="InterPro" id="IPR036259">
    <property type="entry name" value="MFS_trans_sf"/>
</dbReference>
<dbReference type="InterPro" id="IPR050327">
    <property type="entry name" value="Proton-linked_MCT"/>
</dbReference>
<dbReference type="PANTHER" id="PTHR11360">
    <property type="entry name" value="MONOCARBOXYLATE TRANSPORTER"/>
    <property type="match status" value="1"/>
</dbReference>
<dbReference type="PANTHER" id="PTHR11360:SF119">
    <property type="entry name" value="MONOCARBOXYLATE TRANSPORTER 10"/>
    <property type="match status" value="1"/>
</dbReference>
<dbReference type="Pfam" id="PF07690">
    <property type="entry name" value="MFS_1"/>
    <property type="match status" value="1"/>
</dbReference>
<dbReference type="SUPFAM" id="SSF103473">
    <property type="entry name" value="MFS general substrate transporter"/>
    <property type="match status" value="1"/>
</dbReference>
<dbReference type="PROSITE" id="PS50850">
    <property type="entry name" value="MFS"/>
    <property type="match status" value="1"/>
</dbReference>
<protein>
    <recommendedName>
        <fullName>Monocarboxylate transporter 10</fullName>
        <shortName>MCT 10</shortName>
    </recommendedName>
    <alternativeName>
        <fullName>Solute carrier family 16 member 10</fullName>
    </alternativeName>
</protein>